<name>SYV_PSE14</name>
<reference key="1">
    <citation type="journal article" date="2005" name="J. Bacteriol.">
        <title>Whole-genome sequence analysis of Pseudomonas syringae pv. phaseolicola 1448A reveals divergence among pathovars in genes involved in virulence and transposition.</title>
        <authorList>
            <person name="Joardar V."/>
            <person name="Lindeberg M."/>
            <person name="Jackson R.W."/>
            <person name="Selengut J."/>
            <person name="Dodson R."/>
            <person name="Brinkac L.M."/>
            <person name="Daugherty S.C."/>
            <person name="DeBoy R.T."/>
            <person name="Durkin A.S."/>
            <person name="Gwinn Giglio M."/>
            <person name="Madupu R."/>
            <person name="Nelson W.C."/>
            <person name="Rosovitz M.J."/>
            <person name="Sullivan S.A."/>
            <person name="Crabtree J."/>
            <person name="Creasy T."/>
            <person name="Davidsen T.M."/>
            <person name="Haft D.H."/>
            <person name="Zafar N."/>
            <person name="Zhou L."/>
            <person name="Halpin R."/>
            <person name="Holley T."/>
            <person name="Khouri H.M."/>
            <person name="Feldblyum T.V."/>
            <person name="White O."/>
            <person name="Fraser C.M."/>
            <person name="Chatterjee A.K."/>
            <person name="Cartinhour S."/>
            <person name="Schneider D."/>
            <person name="Mansfield J.W."/>
            <person name="Collmer A."/>
            <person name="Buell R."/>
        </authorList>
    </citation>
    <scope>NUCLEOTIDE SEQUENCE [LARGE SCALE GENOMIC DNA]</scope>
    <source>
        <strain>1448A / Race 6</strain>
    </source>
</reference>
<feature type="chain" id="PRO_0000224538" description="Valine--tRNA ligase">
    <location>
        <begin position="1"/>
        <end position="948"/>
    </location>
</feature>
<feature type="coiled-coil region" evidence="1">
    <location>
        <begin position="879"/>
        <end position="945"/>
    </location>
</feature>
<feature type="short sequence motif" description="'HIGH' region">
    <location>
        <begin position="40"/>
        <end position="50"/>
    </location>
</feature>
<feature type="short sequence motif" description="'KMSKS' region">
    <location>
        <begin position="551"/>
        <end position="555"/>
    </location>
</feature>
<feature type="binding site" evidence="1">
    <location>
        <position position="554"/>
    </location>
    <ligand>
        <name>ATP</name>
        <dbReference type="ChEBI" id="CHEBI:30616"/>
    </ligand>
</feature>
<accession>Q48MF2</accession>
<proteinExistence type="inferred from homology"/>
<evidence type="ECO:0000255" key="1">
    <source>
        <dbReference type="HAMAP-Rule" id="MF_02004"/>
    </source>
</evidence>
<sequence length="948" mass="107027">MDKTYQPHAIETSWYQTWESENYFAPQGVGDSYTIMIPPPNVTGSLHMGHGFNNAIMDALIRFRRMQGRNTLWQPGTDHAGIATQMLVERRLEAQGISRHELGREKFLDKIWEWKAESGGNISRQIRRLGSSVDWSRERFTMDDGLSDAVKEAFVRLHEDGLIYRGKRLVNWDTKLHTAISDLEVENHDEKGHLWNLRYPLADGAKTAEGLDYLIVATTRPETMLGDAAVAVNPQDERYKALIGKFVELPLVGRRIPIIADDYCDPEFGTGCVKITPAHDFNDYEVGKRHNLPLLNIFDKNANVLAAAQVFNLDGTLNESVDGSLPAAYAGLDRFEARKQIVAAFDAAGLLVSVDDHALKVPKGDRSGTIIEPWLTDQWYVSTKPLAEPAIAAVEDGRIAFVPKQYENMYFSWMRDIQDWCISRQLWWGHRIPAWYDESGKVYVGRDEAEVRAKNNLGPEIALQQDNDVLDTWFSSGLWTFSTLGWPEKTKALETFHSTDVLVTGFDIIFFWVARMIMLTMHLVKNEDGTPQVPFKTVYVHGLVRDGQGQKMSKSKGNVLDPLDIVDGIDLETLVEKRTSGLMQPQLAKKIEKQTRQEFADGIASYGTDALRFTFCSLASTGRDIKFDMGRVEGYRNFCNKIWNAARYVLDKGEDCGQNGEAVELSLADRWIISQLQRTEAEVTRQLDQFRFDLAAQALYEFIWNQYCDWYLELSKPVLWDETAPVERQRGTRRTLVRVLEVALRLAHPFMPFITEEIWQRLAPLAGAQGKTIMLQPWPVANEARIDQAAEDDIEWLKGLMLAVRNIRGEMNIGPGKPLQLFLKNVSAEDQRRLSENDYLLKKLAKLESMTVLTEGAEAPLSATALVGDMEVLVPMAGLIDKGAELARLDKEIQRLQGEVQRVGGKLSNAAFVDKAPPEVIAKERAKLTEAEQALGKLAEQHARIASL</sequence>
<gene>
    <name evidence="1" type="primary">valS</name>
    <name type="ordered locus">PSPPH_1153</name>
</gene>
<organism>
    <name type="scientific">Pseudomonas savastanoi pv. phaseolicola (strain 1448A / Race 6)</name>
    <name type="common">Pseudomonas syringae pv. phaseolicola (strain 1448A / Race 6)</name>
    <dbReference type="NCBI Taxonomy" id="264730"/>
    <lineage>
        <taxon>Bacteria</taxon>
        <taxon>Pseudomonadati</taxon>
        <taxon>Pseudomonadota</taxon>
        <taxon>Gammaproteobacteria</taxon>
        <taxon>Pseudomonadales</taxon>
        <taxon>Pseudomonadaceae</taxon>
        <taxon>Pseudomonas</taxon>
    </lineage>
</organism>
<protein>
    <recommendedName>
        <fullName evidence="1">Valine--tRNA ligase</fullName>
        <ecNumber evidence="1">6.1.1.9</ecNumber>
    </recommendedName>
    <alternativeName>
        <fullName evidence="1">Valyl-tRNA synthetase</fullName>
        <shortName evidence="1">ValRS</shortName>
    </alternativeName>
</protein>
<comment type="function">
    <text evidence="1">Catalyzes the attachment of valine to tRNA(Val). As ValRS can inadvertently accommodate and process structurally similar amino acids such as threonine, to avoid such errors, it has a 'posttransfer' editing activity that hydrolyzes mischarged Thr-tRNA(Val) in a tRNA-dependent manner.</text>
</comment>
<comment type="catalytic activity">
    <reaction evidence="1">
        <text>tRNA(Val) + L-valine + ATP = L-valyl-tRNA(Val) + AMP + diphosphate</text>
        <dbReference type="Rhea" id="RHEA:10704"/>
        <dbReference type="Rhea" id="RHEA-COMP:9672"/>
        <dbReference type="Rhea" id="RHEA-COMP:9708"/>
        <dbReference type="ChEBI" id="CHEBI:30616"/>
        <dbReference type="ChEBI" id="CHEBI:33019"/>
        <dbReference type="ChEBI" id="CHEBI:57762"/>
        <dbReference type="ChEBI" id="CHEBI:78442"/>
        <dbReference type="ChEBI" id="CHEBI:78537"/>
        <dbReference type="ChEBI" id="CHEBI:456215"/>
        <dbReference type="EC" id="6.1.1.9"/>
    </reaction>
</comment>
<comment type="subunit">
    <text evidence="1">Monomer.</text>
</comment>
<comment type="subcellular location">
    <subcellularLocation>
        <location evidence="1">Cytoplasm</location>
    </subcellularLocation>
</comment>
<comment type="domain">
    <text evidence="1">ValRS has two distinct active sites: one for aminoacylation and one for editing. The misactivated threonine is translocated from the active site to the editing site.</text>
</comment>
<comment type="domain">
    <text evidence="1">The C-terminal coiled-coil domain is crucial for aminoacylation activity.</text>
</comment>
<comment type="similarity">
    <text evidence="1">Belongs to the class-I aminoacyl-tRNA synthetase family. ValS type 1 subfamily.</text>
</comment>
<dbReference type="EC" id="6.1.1.9" evidence="1"/>
<dbReference type="EMBL" id="CP000058">
    <property type="protein sequence ID" value="AAZ33987.1"/>
    <property type="molecule type" value="Genomic_DNA"/>
</dbReference>
<dbReference type="RefSeq" id="WP_011167924.1">
    <property type="nucleotide sequence ID" value="NC_005773.3"/>
</dbReference>
<dbReference type="SMR" id="Q48MF2"/>
<dbReference type="KEGG" id="psp:PSPPH_1153"/>
<dbReference type="eggNOG" id="COG0525">
    <property type="taxonomic scope" value="Bacteria"/>
</dbReference>
<dbReference type="HOGENOM" id="CLU_001493_0_2_6"/>
<dbReference type="Proteomes" id="UP000000551">
    <property type="component" value="Chromosome"/>
</dbReference>
<dbReference type="GO" id="GO:0005829">
    <property type="term" value="C:cytosol"/>
    <property type="evidence" value="ECO:0007669"/>
    <property type="project" value="TreeGrafter"/>
</dbReference>
<dbReference type="GO" id="GO:0002161">
    <property type="term" value="F:aminoacyl-tRNA deacylase activity"/>
    <property type="evidence" value="ECO:0007669"/>
    <property type="project" value="InterPro"/>
</dbReference>
<dbReference type="GO" id="GO:0005524">
    <property type="term" value="F:ATP binding"/>
    <property type="evidence" value="ECO:0007669"/>
    <property type="project" value="UniProtKB-UniRule"/>
</dbReference>
<dbReference type="GO" id="GO:0004832">
    <property type="term" value="F:valine-tRNA ligase activity"/>
    <property type="evidence" value="ECO:0007669"/>
    <property type="project" value="UniProtKB-UniRule"/>
</dbReference>
<dbReference type="GO" id="GO:0006438">
    <property type="term" value="P:valyl-tRNA aminoacylation"/>
    <property type="evidence" value="ECO:0007669"/>
    <property type="project" value="UniProtKB-UniRule"/>
</dbReference>
<dbReference type="CDD" id="cd07962">
    <property type="entry name" value="Anticodon_Ia_Val"/>
    <property type="match status" value="1"/>
</dbReference>
<dbReference type="CDD" id="cd00817">
    <property type="entry name" value="ValRS_core"/>
    <property type="match status" value="1"/>
</dbReference>
<dbReference type="FunFam" id="1.10.287.380:FF:000001">
    <property type="entry name" value="Valine--tRNA ligase"/>
    <property type="match status" value="1"/>
</dbReference>
<dbReference type="FunFam" id="1.10.730.10:FF:000007">
    <property type="entry name" value="Valine--tRNA ligase"/>
    <property type="match status" value="1"/>
</dbReference>
<dbReference type="FunFam" id="3.40.50.620:FF:000146">
    <property type="entry name" value="Valine--tRNA ligase"/>
    <property type="match status" value="1"/>
</dbReference>
<dbReference type="FunFam" id="3.90.740.10:FF:000003">
    <property type="entry name" value="Valine--tRNA ligase"/>
    <property type="match status" value="1"/>
</dbReference>
<dbReference type="FunFam" id="3.40.50.620:FF:000020">
    <property type="entry name" value="Valine--tRNA ligase, mitochondrial"/>
    <property type="match status" value="1"/>
</dbReference>
<dbReference type="Gene3D" id="3.40.50.620">
    <property type="entry name" value="HUPs"/>
    <property type="match status" value="2"/>
</dbReference>
<dbReference type="Gene3D" id="1.10.730.10">
    <property type="entry name" value="Isoleucyl-tRNA Synthetase, Domain 1"/>
    <property type="match status" value="1"/>
</dbReference>
<dbReference type="Gene3D" id="1.10.287.380">
    <property type="entry name" value="Valyl-tRNA synthetase, C-terminal domain"/>
    <property type="match status" value="1"/>
</dbReference>
<dbReference type="Gene3D" id="3.90.740.10">
    <property type="entry name" value="Valyl/Leucyl/Isoleucyl-tRNA synthetase, editing domain"/>
    <property type="match status" value="1"/>
</dbReference>
<dbReference type="HAMAP" id="MF_02004">
    <property type="entry name" value="Val_tRNA_synth_type1"/>
    <property type="match status" value="1"/>
</dbReference>
<dbReference type="InterPro" id="IPR001412">
    <property type="entry name" value="aa-tRNA-synth_I_CS"/>
</dbReference>
<dbReference type="InterPro" id="IPR002300">
    <property type="entry name" value="aa-tRNA-synth_Ia"/>
</dbReference>
<dbReference type="InterPro" id="IPR033705">
    <property type="entry name" value="Anticodon_Ia_Val"/>
</dbReference>
<dbReference type="InterPro" id="IPR013155">
    <property type="entry name" value="M/V/L/I-tRNA-synth_anticd-bd"/>
</dbReference>
<dbReference type="InterPro" id="IPR014729">
    <property type="entry name" value="Rossmann-like_a/b/a_fold"/>
</dbReference>
<dbReference type="InterPro" id="IPR010978">
    <property type="entry name" value="tRNA-bd_arm"/>
</dbReference>
<dbReference type="InterPro" id="IPR009080">
    <property type="entry name" value="tRNAsynth_Ia_anticodon-bd"/>
</dbReference>
<dbReference type="InterPro" id="IPR037118">
    <property type="entry name" value="Val-tRNA_synth_C_sf"/>
</dbReference>
<dbReference type="InterPro" id="IPR019499">
    <property type="entry name" value="Val-tRNA_synth_tRNA-bd"/>
</dbReference>
<dbReference type="InterPro" id="IPR009008">
    <property type="entry name" value="Val/Leu/Ile-tRNA-synth_edit"/>
</dbReference>
<dbReference type="InterPro" id="IPR002303">
    <property type="entry name" value="Valyl-tRNA_ligase"/>
</dbReference>
<dbReference type="NCBIfam" id="NF004349">
    <property type="entry name" value="PRK05729.1"/>
    <property type="match status" value="1"/>
</dbReference>
<dbReference type="NCBIfam" id="TIGR00422">
    <property type="entry name" value="valS"/>
    <property type="match status" value="1"/>
</dbReference>
<dbReference type="PANTHER" id="PTHR11946:SF93">
    <property type="entry name" value="VALINE--TRNA LIGASE, CHLOROPLASTIC_MITOCHONDRIAL 2"/>
    <property type="match status" value="1"/>
</dbReference>
<dbReference type="PANTHER" id="PTHR11946">
    <property type="entry name" value="VALYL-TRNA SYNTHETASES"/>
    <property type="match status" value="1"/>
</dbReference>
<dbReference type="Pfam" id="PF08264">
    <property type="entry name" value="Anticodon_1"/>
    <property type="match status" value="1"/>
</dbReference>
<dbReference type="Pfam" id="PF00133">
    <property type="entry name" value="tRNA-synt_1"/>
    <property type="match status" value="1"/>
</dbReference>
<dbReference type="Pfam" id="PF10458">
    <property type="entry name" value="Val_tRNA-synt_C"/>
    <property type="match status" value="1"/>
</dbReference>
<dbReference type="PRINTS" id="PR00986">
    <property type="entry name" value="TRNASYNTHVAL"/>
</dbReference>
<dbReference type="SUPFAM" id="SSF47323">
    <property type="entry name" value="Anticodon-binding domain of a subclass of class I aminoacyl-tRNA synthetases"/>
    <property type="match status" value="1"/>
</dbReference>
<dbReference type="SUPFAM" id="SSF52374">
    <property type="entry name" value="Nucleotidylyl transferase"/>
    <property type="match status" value="1"/>
</dbReference>
<dbReference type="SUPFAM" id="SSF46589">
    <property type="entry name" value="tRNA-binding arm"/>
    <property type="match status" value="1"/>
</dbReference>
<dbReference type="SUPFAM" id="SSF50677">
    <property type="entry name" value="ValRS/IleRS/LeuRS editing domain"/>
    <property type="match status" value="1"/>
</dbReference>
<dbReference type="PROSITE" id="PS00178">
    <property type="entry name" value="AA_TRNA_LIGASE_I"/>
    <property type="match status" value="1"/>
</dbReference>
<keyword id="KW-0030">Aminoacyl-tRNA synthetase</keyword>
<keyword id="KW-0067">ATP-binding</keyword>
<keyword id="KW-0175">Coiled coil</keyword>
<keyword id="KW-0963">Cytoplasm</keyword>
<keyword id="KW-0436">Ligase</keyword>
<keyword id="KW-0547">Nucleotide-binding</keyword>
<keyword id="KW-0648">Protein biosynthesis</keyword>